<organism>
    <name type="scientific">Staphylococcus aureus (strain N315)</name>
    <dbReference type="NCBI Taxonomy" id="158879"/>
    <lineage>
        <taxon>Bacteria</taxon>
        <taxon>Bacillati</taxon>
        <taxon>Bacillota</taxon>
        <taxon>Bacilli</taxon>
        <taxon>Bacillales</taxon>
        <taxon>Staphylococcaceae</taxon>
        <taxon>Staphylococcus</taxon>
    </lineage>
</organism>
<evidence type="ECO:0000255" key="1">
    <source>
        <dbReference type="HAMAP-Rule" id="MF_00440"/>
    </source>
</evidence>
<proteinExistence type="inferred from homology"/>
<comment type="function">
    <text evidence="1">Negatively regulates transcription of bacterial ribonucleotide reductase nrd genes and operons by binding to NrdR-boxes.</text>
</comment>
<comment type="cofactor">
    <cofactor evidence="1">
        <name>Zn(2+)</name>
        <dbReference type="ChEBI" id="CHEBI:29105"/>
    </cofactor>
    <text evidence="1">Binds 1 zinc ion.</text>
</comment>
<comment type="similarity">
    <text evidence="1">Belongs to the NrdR family.</text>
</comment>
<sequence>MKCPKCNSTQSKVVDSRHADELNAIRRRRECENCGTRFTTFEHIEVSQLIVVKKDGTREQFSREKILNGLVRSCEKRPVRYQQLEDITNKVEWQLRDEGHTEVSSRDIGEHVMNLLMHVDQVSYVRFASVYKEFKDVDQLLASMQGILSENKRSDA</sequence>
<dbReference type="EMBL" id="BA000018">
    <property type="protein sequence ID" value="BAB42776.1"/>
    <property type="molecule type" value="Genomic_DNA"/>
</dbReference>
<dbReference type="PIR" id="C89952">
    <property type="entry name" value="C89952"/>
</dbReference>
<dbReference type="RefSeq" id="WP_000650082.1">
    <property type="nucleotide sequence ID" value="NC_002745.2"/>
</dbReference>
<dbReference type="SMR" id="P67316"/>
<dbReference type="EnsemblBacteria" id="BAB42776">
    <property type="protein sequence ID" value="BAB42776"/>
    <property type="gene ID" value="BAB42776"/>
</dbReference>
<dbReference type="GeneID" id="66839865"/>
<dbReference type="KEGG" id="sau:SA1509"/>
<dbReference type="HOGENOM" id="CLU_108412_0_0_9"/>
<dbReference type="GO" id="GO:0005524">
    <property type="term" value="F:ATP binding"/>
    <property type="evidence" value="ECO:0007669"/>
    <property type="project" value="UniProtKB-KW"/>
</dbReference>
<dbReference type="GO" id="GO:0003677">
    <property type="term" value="F:DNA binding"/>
    <property type="evidence" value="ECO:0007669"/>
    <property type="project" value="UniProtKB-KW"/>
</dbReference>
<dbReference type="GO" id="GO:0008270">
    <property type="term" value="F:zinc ion binding"/>
    <property type="evidence" value="ECO:0007669"/>
    <property type="project" value="UniProtKB-UniRule"/>
</dbReference>
<dbReference type="GO" id="GO:0045892">
    <property type="term" value="P:negative regulation of DNA-templated transcription"/>
    <property type="evidence" value="ECO:0007669"/>
    <property type="project" value="UniProtKB-UniRule"/>
</dbReference>
<dbReference type="HAMAP" id="MF_00440">
    <property type="entry name" value="NrdR"/>
    <property type="match status" value="1"/>
</dbReference>
<dbReference type="InterPro" id="IPR005144">
    <property type="entry name" value="ATP-cone_dom"/>
</dbReference>
<dbReference type="InterPro" id="IPR055173">
    <property type="entry name" value="NrdR-like_N"/>
</dbReference>
<dbReference type="InterPro" id="IPR003796">
    <property type="entry name" value="RNR_NrdR-like"/>
</dbReference>
<dbReference type="NCBIfam" id="TIGR00244">
    <property type="entry name" value="transcriptional regulator NrdR"/>
    <property type="match status" value="1"/>
</dbReference>
<dbReference type="PANTHER" id="PTHR30455">
    <property type="entry name" value="TRANSCRIPTIONAL REPRESSOR NRDR"/>
    <property type="match status" value="1"/>
</dbReference>
<dbReference type="PANTHER" id="PTHR30455:SF2">
    <property type="entry name" value="TRANSCRIPTIONAL REPRESSOR NRDR"/>
    <property type="match status" value="1"/>
</dbReference>
<dbReference type="Pfam" id="PF03477">
    <property type="entry name" value="ATP-cone"/>
    <property type="match status" value="1"/>
</dbReference>
<dbReference type="Pfam" id="PF22811">
    <property type="entry name" value="Zn_ribbon_NrdR"/>
    <property type="match status" value="1"/>
</dbReference>
<dbReference type="PROSITE" id="PS51161">
    <property type="entry name" value="ATP_CONE"/>
    <property type="match status" value="1"/>
</dbReference>
<accession>P67316</accession>
<accession>Q99TH6</accession>
<reference key="1">
    <citation type="journal article" date="2001" name="Lancet">
        <title>Whole genome sequencing of meticillin-resistant Staphylococcus aureus.</title>
        <authorList>
            <person name="Kuroda M."/>
            <person name="Ohta T."/>
            <person name="Uchiyama I."/>
            <person name="Baba T."/>
            <person name="Yuzawa H."/>
            <person name="Kobayashi I."/>
            <person name="Cui L."/>
            <person name="Oguchi A."/>
            <person name="Aoki K."/>
            <person name="Nagai Y."/>
            <person name="Lian J.-Q."/>
            <person name="Ito T."/>
            <person name="Kanamori M."/>
            <person name="Matsumaru H."/>
            <person name="Maruyama A."/>
            <person name="Murakami H."/>
            <person name="Hosoyama A."/>
            <person name="Mizutani-Ui Y."/>
            <person name="Takahashi N.K."/>
            <person name="Sawano T."/>
            <person name="Inoue R."/>
            <person name="Kaito C."/>
            <person name="Sekimizu K."/>
            <person name="Hirakawa H."/>
            <person name="Kuhara S."/>
            <person name="Goto S."/>
            <person name="Yabuzaki J."/>
            <person name="Kanehisa M."/>
            <person name="Yamashita A."/>
            <person name="Oshima K."/>
            <person name="Furuya K."/>
            <person name="Yoshino C."/>
            <person name="Shiba T."/>
            <person name="Hattori M."/>
            <person name="Ogasawara N."/>
            <person name="Hayashi H."/>
            <person name="Hiramatsu K."/>
        </authorList>
    </citation>
    <scope>NUCLEOTIDE SEQUENCE [LARGE SCALE GENOMIC DNA]</scope>
    <source>
        <strain>N315</strain>
    </source>
</reference>
<feature type="chain" id="PRO_0000182351" description="Transcriptional repressor NrdR">
    <location>
        <begin position="1"/>
        <end position="156"/>
    </location>
</feature>
<feature type="domain" description="ATP-cone" evidence="1">
    <location>
        <begin position="49"/>
        <end position="139"/>
    </location>
</feature>
<feature type="zinc finger region" evidence="1">
    <location>
        <begin position="3"/>
        <end position="34"/>
    </location>
</feature>
<keyword id="KW-0067">ATP-binding</keyword>
<keyword id="KW-0238">DNA-binding</keyword>
<keyword id="KW-0479">Metal-binding</keyword>
<keyword id="KW-0547">Nucleotide-binding</keyword>
<keyword id="KW-0678">Repressor</keyword>
<keyword id="KW-0804">Transcription</keyword>
<keyword id="KW-0805">Transcription regulation</keyword>
<keyword id="KW-0862">Zinc</keyword>
<keyword id="KW-0863">Zinc-finger</keyword>
<gene>
    <name evidence="1" type="primary">nrdR</name>
    <name type="ordered locus">SA1509</name>
</gene>
<name>NRDR_STAAN</name>
<protein>
    <recommendedName>
        <fullName evidence="1">Transcriptional repressor NrdR</fullName>
    </recommendedName>
</protein>